<reference key="1">
    <citation type="submission" date="2006-10" db="EMBL/GenBank/DDBJ databases">
        <authorList>
            <consortium name="NIH - Mammalian Gene Collection (MGC) project"/>
        </authorList>
    </citation>
    <scope>NUCLEOTIDE SEQUENCE [LARGE SCALE MRNA]</scope>
    <source>
        <strain>Hereford</strain>
        <tissue>Thalamus</tissue>
    </source>
</reference>
<name>DDX27_BOVIN</name>
<accession>A1A4H6</accession>
<comment type="function">
    <text evidence="2">Probable ATP-dependent RNA helicase. Component of the nucleolar ribosomal RNA (rRNA) processing machinery that regulates 3' end formation of ribosomal 47S rRNA.</text>
</comment>
<comment type="catalytic activity">
    <reaction>
        <text>ATP + H2O = ADP + phosphate + H(+)</text>
        <dbReference type="Rhea" id="RHEA:13065"/>
        <dbReference type="ChEBI" id="CHEBI:15377"/>
        <dbReference type="ChEBI" id="CHEBI:15378"/>
        <dbReference type="ChEBI" id="CHEBI:30616"/>
        <dbReference type="ChEBI" id="CHEBI:43474"/>
        <dbReference type="ChEBI" id="CHEBI:456216"/>
        <dbReference type="EC" id="3.6.4.13"/>
    </reaction>
</comment>
<comment type="subunit">
    <text evidence="2">Associates with PeBoW complex, composed of BOP1, PES1 and WDR12. Interacts directly with BOP1 and PES1.</text>
</comment>
<comment type="subcellular location">
    <subcellularLocation>
        <location evidence="2">Nucleus</location>
        <location evidence="2">Nucleolus</location>
    </subcellularLocation>
    <subcellularLocation>
        <location evidence="2">Chromosome</location>
    </subcellularLocation>
    <text evidence="2">Associates with 60S and 90S pre-ribosomal particles.</text>
</comment>
<comment type="domain">
    <text evidence="2">The C-terminal domain regulates nucleolar localization.</text>
</comment>
<comment type="similarity">
    <text evidence="7">Belongs to the DEAD box helicase family. DDX27/DRS1 subfamily.</text>
</comment>
<dbReference type="EC" id="3.6.4.13"/>
<dbReference type="EMBL" id="BC126497">
    <property type="protein sequence ID" value="AAI26498.1"/>
    <property type="molecule type" value="mRNA"/>
</dbReference>
<dbReference type="RefSeq" id="NP_001073740.1">
    <property type="nucleotide sequence ID" value="NM_001080271.1"/>
</dbReference>
<dbReference type="SMR" id="A1A4H6"/>
<dbReference type="FunCoup" id="A1A4H6">
    <property type="interactions" value="3361"/>
</dbReference>
<dbReference type="STRING" id="9913.ENSBTAP00000048220"/>
<dbReference type="PaxDb" id="9913-ENSBTAP00000048220"/>
<dbReference type="GeneID" id="514567"/>
<dbReference type="KEGG" id="bta:514567"/>
<dbReference type="CTD" id="55661"/>
<dbReference type="VEuPathDB" id="HostDB:ENSBTAG00000006671"/>
<dbReference type="eggNOG" id="KOG0338">
    <property type="taxonomic scope" value="Eukaryota"/>
</dbReference>
<dbReference type="HOGENOM" id="CLU_003041_3_3_1"/>
<dbReference type="InParanoid" id="A1A4H6"/>
<dbReference type="OMA" id="MIDPPKQ"/>
<dbReference type="OrthoDB" id="10259843at2759"/>
<dbReference type="TreeFam" id="TF314780"/>
<dbReference type="CD-CODE" id="D7FE2080">
    <property type="entry name" value="Nucleolus"/>
</dbReference>
<dbReference type="Proteomes" id="UP000009136">
    <property type="component" value="Chromosome 13"/>
</dbReference>
<dbReference type="Bgee" id="ENSBTAG00000006671">
    <property type="expression patterns" value="Expressed in mesenteric lymph node and 107 other cell types or tissues"/>
</dbReference>
<dbReference type="GO" id="GO:0005694">
    <property type="term" value="C:chromosome"/>
    <property type="evidence" value="ECO:0000250"/>
    <property type="project" value="UniProtKB"/>
</dbReference>
<dbReference type="GO" id="GO:0005730">
    <property type="term" value="C:nucleolus"/>
    <property type="evidence" value="ECO:0000250"/>
    <property type="project" value="UniProtKB"/>
</dbReference>
<dbReference type="GO" id="GO:0005524">
    <property type="term" value="F:ATP binding"/>
    <property type="evidence" value="ECO:0007669"/>
    <property type="project" value="UniProtKB-KW"/>
</dbReference>
<dbReference type="GO" id="GO:0016887">
    <property type="term" value="F:ATP hydrolysis activity"/>
    <property type="evidence" value="ECO:0007669"/>
    <property type="project" value="RHEA"/>
</dbReference>
<dbReference type="GO" id="GO:0003676">
    <property type="term" value="F:nucleic acid binding"/>
    <property type="evidence" value="ECO:0007669"/>
    <property type="project" value="InterPro"/>
</dbReference>
<dbReference type="GO" id="GO:0003724">
    <property type="term" value="F:RNA helicase activity"/>
    <property type="evidence" value="ECO:0007669"/>
    <property type="project" value="UniProtKB-EC"/>
</dbReference>
<dbReference type="GO" id="GO:0006364">
    <property type="term" value="P:rRNA processing"/>
    <property type="evidence" value="ECO:0000250"/>
    <property type="project" value="UniProtKB"/>
</dbReference>
<dbReference type="CDD" id="cd17947">
    <property type="entry name" value="DEADc_DDX27"/>
    <property type="match status" value="1"/>
</dbReference>
<dbReference type="CDD" id="cd18787">
    <property type="entry name" value="SF2_C_DEAD"/>
    <property type="match status" value="1"/>
</dbReference>
<dbReference type="FunFam" id="3.40.50.300:FF:000842">
    <property type="entry name" value="ATP-dependent RNA helicase DRS1"/>
    <property type="match status" value="1"/>
</dbReference>
<dbReference type="FunFam" id="3.40.50.300:FF:001134">
    <property type="entry name" value="Probable ATP-dependent RNA helicase DDX27"/>
    <property type="match status" value="1"/>
</dbReference>
<dbReference type="Gene3D" id="3.40.50.300">
    <property type="entry name" value="P-loop containing nucleotide triphosphate hydrolases"/>
    <property type="match status" value="2"/>
</dbReference>
<dbReference type="InterPro" id="IPR011545">
    <property type="entry name" value="DEAD/DEAH_box_helicase_dom"/>
</dbReference>
<dbReference type="InterPro" id="IPR050079">
    <property type="entry name" value="DEAD_box_RNA_helicase"/>
</dbReference>
<dbReference type="InterPro" id="IPR014001">
    <property type="entry name" value="Helicase_ATP-bd"/>
</dbReference>
<dbReference type="InterPro" id="IPR001650">
    <property type="entry name" value="Helicase_C-like"/>
</dbReference>
<dbReference type="InterPro" id="IPR027417">
    <property type="entry name" value="P-loop_NTPase"/>
</dbReference>
<dbReference type="InterPro" id="IPR000629">
    <property type="entry name" value="RNA-helicase_DEAD-box_CS"/>
</dbReference>
<dbReference type="InterPro" id="IPR014014">
    <property type="entry name" value="RNA_helicase_DEAD_Q_motif"/>
</dbReference>
<dbReference type="PANTHER" id="PTHR47959">
    <property type="entry name" value="ATP-DEPENDENT RNA HELICASE RHLE-RELATED"/>
    <property type="match status" value="1"/>
</dbReference>
<dbReference type="PANTHER" id="PTHR47959:SF22">
    <property type="entry name" value="RNA HELICASE"/>
    <property type="match status" value="1"/>
</dbReference>
<dbReference type="Pfam" id="PF00270">
    <property type="entry name" value="DEAD"/>
    <property type="match status" value="1"/>
</dbReference>
<dbReference type="Pfam" id="PF00271">
    <property type="entry name" value="Helicase_C"/>
    <property type="match status" value="1"/>
</dbReference>
<dbReference type="SMART" id="SM00487">
    <property type="entry name" value="DEXDc"/>
    <property type="match status" value="1"/>
</dbReference>
<dbReference type="SMART" id="SM00490">
    <property type="entry name" value="HELICc"/>
    <property type="match status" value="1"/>
</dbReference>
<dbReference type="SUPFAM" id="SSF52540">
    <property type="entry name" value="P-loop containing nucleoside triphosphate hydrolases"/>
    <property type="match status" value="2"/>
</dbReference>
<dbReference type="PROSITE" id="PS00039">
    <property type="entry name" value="DEAD_ATP_HELICASE"/>
    <property type="match status" value="1"/>
</dbReference>
<dbReference type="PROSITE" id="PS51192">
    <property type="entry name" value="HELICASE_ATP_BIND_1"/>
    <property type="match status" value="1"/>
</dbReference>
<dbReference type="PROSITE" id="PS51194">
    <property type="entry name" value="HELICASE_CTER"/>
    <property type="match status" value="1"/>
</dbReference>
<dbReference type="PROSITE" id="PS51195">
    <property type="entry name" value="Q_MOTIF"/>
    <property type="match status" value="1"/>
</dbReference>
<proteinExistence type="evidence at transcript level"/>
<keyword id="KW-0067">ATP-binding</keyword>
<keyword id="KW-0158">Chromosome</keyword>
<keyword id="KW-0347">Helicase</keyword>
<keyword id="KW-0378">Hydrolase</keyword>
<keyword id="KW-0547">Nucleotide-binding</keyword>
<keyword id="KW-0539">Nucleus</keyword>
<keyword id="KW-0597">Phosphoprotein</keyword>
<keyword id="KW-1185">Reference proteome</keyword>
<keyword id="KW-0690">Ribosome biogenesis</keyword>
<keyword id="KW-0698">rRNA processing</keyword>
<evidence type="ECO:0000250" key="1">
    <source>
        <dbReference type="UniProtKB" id="Q921N6"/>
    </source>
</evidence>
<evidence type="ECO:0000250" key="2">
    <source>
        <dbReference type="UniProtKB" id="Q96GQ7"/>
    </source>
</evidence>
<evidence type="ECO:0000255" key="3"/>
<evidence type="ECO:0000255" key="4">
    <source>
        <dbReference type="PROSITE-ProRule" id="PRU00541"/>
    </source>
</evidence>
<evidence type="ECO:0000255" key="5">
    <source>
        <dbReference type="PROSITE-ProRule" id="PRU00542"/>
    </source>
</evidence>
<evidence type="ECO:0000256" key="6">
    <source>
        <dbReference type="SAM" id="MobiDB-lite"/>
    </source>
</evidence>
<evidence type="ECO:0000305" key="7"/>
<sequence length="765" mass="87087">MLSELGFIRTIGEDEDVQVEPETDSEDEEEEGPIVLGRKQKALQKNRSADFNPDFVFTEKEGMYDGSWAMADVLSQLKKKRAATTLDEKIEKVRKKRKTEDKEAKSGKSEKEKEAKEGSEPEEEEDLERKDVEASEDEESETDYSSADENILTKADTLKIKERKKKKKKGQEAGGFFEDASQYDENLSFQDMNLSRPLLKAITAMGFKQPTPIQKACIPVGLLGKDICACAATGTGKTAAFALPVLERLIYKPRQAPVTRVLVLVPTRELGIQVHSVTKQLAQFCSITTCLAVGGLDVKSQEAALRAAPDILIATPGRLIDHLHNCPSFHLSSIEVLILDEADRMLDEYFEEQMKEIIRMCSHHRQTMLFSATMTDEVKDLASVSLKNPVRIFVNSNTDVAPFLRQEFIRIRPNREGDREAIVAALLMRTFTDHVMLFTQTKKQAHRMHILLGLMGLQVGELHGNLSQTQRLEALRRFKDEQIDILVATDVAARGLDIEGVKTVINFTMPNTIKHYVHRVGRTARAGRAGRSVSLVGEEERKMLKEIVKAAKAPVKARILPQDVILKFRDKIEKMEKDVYAVLQLEAEEKEMQKSEAQINTAQRLLEKGKEAPNPEPERSWFQTKEERKKEKIAKALQEFDLALRGKKKRKKFMKEAKKKGEMTAEERSQFEILKAQMFAERLAKRNRRAKRARAMPEEEPVRAPAKKQKQVKKSVFDEELTNTSKKALKQYRAGPSFEERKKLGLPHQRRGGNFKSKSRYKRRK</sequence>
<feature type="chain" id="PRO_0000282324" description="Probable ATP-dependent RNA helicase DDX27">
    <location>
        <begin position="1"/>
        <end position="765"/>
    </location>
</feature>
<feature type="domain" description="Helicase ATP-binding" evidence="4">
    <location>
        <begin position="218"/>
        <end position="392"/>
    </location>
</feature>
<feature type="domain" description="Helicase C-terminal" evidence="5">
    <location>
        <begin position="426"/>
        <end position="572"/>
    </location>
</feature>
<feature type="region of interest" description="Disordered" evidence="6">
    <location>
        <begin position="1"/>
        <end position="48"/>
    </location>
</feature>
<feature type="region of interest" description="Disordered" evidence="6">
    <location>
        <begin position="88"/>
        <end position="148"/>
    </location>
</feature>
<feature type="region of interest" description="Disordered" evidence="6">
    <location>
        <begin position="685"/>
        <end position="765"/>
    </location>
</feature>
<feature type="short sequence motif" description="Required for interaction with the PEBOW complex" evidence="2">
    <location>
        <begin position="55"/>
        <end position="57"/>
    </location>
</feature>
<feature type="short sequence motif" description="Nuclear localization signal" evidence="3">
    <location>
        <begin position="164"/>
        <end position="169"/>
    </location>
</feature>
<feature type="short sequence motif" description="Q motif">
    <location>
        <begin position="187"/>
        <end position="215"/>
    </location>
</feature>
<feature type="short sequence motif" description="DEAD box">
    <location>
        <begin position="340"/>
        <end position="343"/>
    </location>
</feature>
<feature type="compositionally biased region" description="Acidic residues" evidence="6">
    <location>
        <begin position="13"/>
        <end position="32"/>
    </location>
</feature>
<feature type="compositionally biased region" description="Basic and acidic residues" evidence="6">
    <location>
        <begin position="98"/>
        <end position="119"/>
    </location>
</feature>
<feature type="compositionally biased region" description="Basic residues" evidence="6">
    <location>
        <begin position="685"/>
        <end position="694"/>
    </location>
</feature>
<feature type="compositionally biased region" description="Basic residues" evidence="6">
    <location>
        <begin position="744"/>
        <end position="765"/>
    </location>
</feature>
<feature type="binding site" evidence="4">
    <location>
        <begin position="231"/>
        <end position="238"/>
    </location>
    <ligand>
        <name>ATP</name>
        <dbReference type="ChEBI" id="CHEBI:30616"/>
    </ligand>
</feature>
<feature type="modified residue" description="Phosphoserine" evidence="1">
    <location>
        <position position="25"/>
    </location>
</feature>
<feature type="modified residue" description="Phosphoserine" evidence="2">
    <location>
        <position position="48"/>
    </location>
</feature>
<feature type="modified residue" description="Phosphoserine" evidence="2">
    <location>
        <position position="135"/>
    </location>
</feature>
<feature type="modified residue" description="Phosphoserine" evidence="2">
    <location>
        <position position="146"/>
    </location>
</feature>
<organism>
    <name type="scientific">Bos taurus</name>
    <name type="common">Bovine</name>
    <dbReference type="NCBI Taxonomy" id="9913"/>
    <lineage>
        <taxon>Eukaryota</taxon>
        <taxon>Metazoa</taxon>
        <taxon>Chordata</taxon>
        <taxon>Craniata</taxon>
        <taxon>Vertebrata</taxon>
        <taxon>Euteleostomi</taxon>
        <taxon>Mammalia</taxon>
        <taxon>Eutheria</taxon>
        <taxon>Laurasiatheria</taxon>
        <taxon>Artiodactyla</taxon>
        <taxon>Ruminantia</taxon>
        <taxon>Pecora</taxon>
        <taxon>Bovidae</taxon>
        <taxon>Bovinae</taxon>
        <taxon>Bos</taxon>
    </lineage>
</organism>
<protein>
    <recommendedName>
        <fullName>Probable ATP-dependent RNA helicase DDX27</fullName>
        <ecNumber>3.6.4.13</ecNumber>
    </recommendedName>
    <alternativeName>
        <fullName>DEAD box protein 27</fullName>
    </alternativeName>
</protein>
<gene>
    <name type="primary">DDX27</name>
</gene>